<feature type="signal peptide" evidence="2">
    <location>
        <begin position="1"/>
        <end position="19"/>
    </location>
</feature>
<feature type="propeptide" id="PRO_0000033522" evidence="2">
    <location>
        <begin position="20"/>
        <end position="56"/>
    </location>
</feature>
<feature type="peptide" id="PRO_0000033523" description="Substance P">
    <location>
        <begin position="58"/>
        <end position="68"/>
    </location>
</feature>
<feature type="peptide" id="PRO_0000033524" description="Neuropeptide K">
    <location>
        <begin position="72"/>
        <end position="107"/>
    </location>
</feature>
<feature type="peptide" id="PRO_0000033525" description="Neuropeptide gamma, 1st part">
    <location>
        <begin position="72"/>
        <end position="73"/>
    </location>
</feature>
<feature type="peptide" id="PRO_0000033526" description="Neuropeptide gamma, 2nd part">
    <location>
        <begin position="89"/>
        <end position="107"/>
    </location>
</feature>
<feature type="peptide" id="PRO_0000033527" description="Neurokinin A">
    <location>
        <begin position="98"/>
        <end position="107"/>
    </location>
</feature>
<feature type="peptide" id="PRO_0000033528" description="C-terminal-flanking peptide">
    <location>
        <begin position="111"/>
        <end position="126"/>
    </location>
</feature>
<feature type="site" description="Cleavage; by FAP" evidence="1">
    <location>
        <begin position="59"/>
        <end position="60"/>
    </location>
</feature>
<feature type="site" description="Cleavage; by MME" evidence="1">
    <location>
        <begin position="63"/>
        <end position="64"/>
    </location>
</feature>
<feature type="site" description="Cleavage; by MME" evidence="1">
    <location>
        <begin position="64"/>
        <end position="65"/>
    </location>
</feature>
<feature type="site" description="Cleavage; by ACE" evidence="1">
    <location>
        <begin position="65"/>
        <end position="66"/>
    </location>
</feature>
<feature type="site" description="Cleavage; by ACE and MME" evidence="1">
    <location>
        <begin position="66"/>
        <end position="67"/>
    </location>
</feature>
<feature type="modified residue" description="Methionine amide" evidence="3">
    <location>
        <position position="68"/>
    </location>
</feature>
<feature type="modified residue" description="Methionine amide" evidence="3">
    <location>
        <position position="107"/>
    </location>
</feature>
<feature type="splice variant" id="VSP_006372" description="In isoform Gamma and isoform Delta." evidence="4 6">
    <location>
        <begin position="74"/>
        <end position="88"/>
    </location>
</feature>
<feature type="splice variant" id="VSP_006373" description="In isoform Alpha and isoform Delta." evidence="5">
    <location>
        <begin position="97"/>
        <end position="114"/>
    </location>
</feature>
<feature type="splice variant" id="VSP_006374" description="In isoform Alpha and isoform Delta." evidence="5">
    <original>V</original>
    <variation>M</variation>
    <location>
        <position position="115"/>
    </location>
</feature>
<feature type="sequence conflict" description="In Ref. 4; AAA30724/AAA30725." evidence="7" ref="4">
    <original>V</original>
    <variation>A</variation>
    <location>
        <position position="121"/>
    </location>
</feature>
<sequence>MKILVAVAVIFFISTQLSAEEIGANDDFNYWSDWSDSDQIKEEMPEPFEHLLQRIARRPKPQQFFGLMGKRDADSSIEKQVALLKALYGHGQLSHKRHKTDSFVGLMGKRALNSVAYERSVMQDYERRRK</sequence>
<accession>P01289</accession>
<accession>A5PK57</accession>
<accession>B0JYM8</accession>
<accession>P01291</accession>
<accession>P04091</accession>
<accession>P20773</accession>
<protein>
    <recommendedName>
        <fullName>Protachykinin-1</fullName>
    </recommendedName>
    <alternativeName>
        <fullName>PPT</fullName>
    </alternativeName>
    <component>
        <recommendedName>
            <fullName>Substance P</fullName>
        </recommendedName>
    </component>
    <component>
        <recommendedName>
            <fullName>Neurokinin A</fullName>
            <shortName>NKA</shortName>
        </recommendedName>
        <alternativeName>
            <fullName>Neuromedin L</fullName>
        </alternativeName>
        <alternativeName>
            <fullName>Substance K</fullName>
        </alternativeName>
    </component>
    <component>
        <recommendedName>
            <fullName>Neuropeptide K</fullName>
            <shortName>NPK</shortName>
        </recommendedName>
    </component>
    <component>
        <recommendedName>
            <fullName>Neuropeptide gamma</fullName>
        </recommendedName>
    </component>
    <component>
        <recommendedName>
            <fullName>C-terminal-flanking peptide</fullName>
        </recommendedName>
    </component>
</protein>
<dbReference type="EMBL" id="X00075">
    <property type="protein sequence ID" value="CAA24939.1"/>
    <property type="molecule type" value="mRNA"/>
</dbReference>
<dbReference type="EMBL" id="X00075">
    <property type="protein sequence ID" value="CAA24940.1"/>
    <property type="molecule type" value="mRNA"/>
</dbReference>
<dbReference type="EMBL" id="X00075">
    <property type="protein sequence ID" value="CAA24941.1"/>
    <property type="molecule type" value="mRNA"/>
</dbReference>
<dbReference type="EMBL" id="X00076">
    <property type="protein sequence ID" value="CAA24942.1"/>
    <property type="molecule type" value="mRNA"/>
</dbReference>
<dbReference type="EMBL" id="X00076">
    <property type="protein sequence ID" value="CAA24943.1"/>
    <property type="status" value="ALT_SEQ"/>
    <property type="molecule type" value="mRNA"/>
</dbReference>
<dbReference type="EMBL" id="X02351">
    <property type="protein sequence ID" value="CAA26206.1"/>
    <property type="molecule type" value="Genomic_DNA"/>
</dbReference>
<dbReference type="EMBL" id="X01396">
    <property type="protein sequence ID" value="CAA26206.1"/>
    <property type="status" value="JOINED"/>
    <property type="molecule type" value="Genomic_DNA"/>
</dbReference>
<dbReference type="EMBL" id="X01397">
    <property type="protein sequence ID" value="CAA26206.1"/>
    <property type="status" value="JOINED"/>
    <property type="molecule type" value="Genomic_DNA"/>
</dbReference>
<dbReference type="EMBL" id="X01398">
    <property type="protein sequence ID" value="CAA26206.1"/>
    <property type="status" value="JOINED"/>
    <property type="molecule type" value="Genomic_DNA"/>
</dbReference>
<dbReference type="EMBL" id="X01399">
    <property type="protein sequence ID" value="CAA26206.1"/>
    <property type="status" value="JOINED"/>
    <property type="molecule type" value="Genomic_DNA"/>
</dbReference>
<dbReference type="EMBL" id="X01400">
    <property type="protein sequence ID" value="CAA26206.1"/>
    <property type="status" value="JOINED"/>
    <property type="molecule type" value="Genomic_DNA"/>
</dbReference>
<dbReference type="EMBL" id="BC142365">
    <property type="protein sequence ID" value="AAI42366.1"/>
    <property type="molecule type" value="mRNA"/>
</dbReference>
<dbReference type="EMBL" id="BC151422">
    <property type="protein sequence ID" value="AAI51423.1"/>
    <property type="molecule type" value="mRNA"/>
</dbReference>
<dbReference type="EMBL" id="M68911">
    <property type="protein sequence ID" value="AAA30724.1"/>
    <property type="molecule type" value="mRNA"/>
</dbReference>
<dbReference type="EMBL" id="M68912">
    <property type="protein sequence ID" value="AAA30725.1"/>
    <property type="molecule type" value="mRNA"/>
</dbReference>
<dbReference type="PIR" id="A05093">
    <property type="entry name" value="SPBOB"/>
</dbReference>
<dbReference type="PIR" id="JC5455">
    <property type="entry name" value="JC5455"/>
</dbReference>
<dbReference type="RefSeq" id="NP_776618.1">
    <molecule id="P01289-1"/>
    <property type="nucleotide sequence ID" value="NM_174193.2"/>
</dbReference>
<dbReference type="RefSeq" id="XP_005205182.1">
    <molecule id="P01289-3"/>
    <property type="nucleotide sequence ID" value="XM_005205125.5"/>
</dbReference>
<dbReference type="RefSeq" id="XP_005205183.1">
    <molecule id="P01289-2"/>
    <property type="nucleotide sequence ID" value="XM_005205126.5"/>
</dbReference>
<dbReference type="RefSeq" id="XP_005205184.1">
    <molecule id="P01289-4"/>
    <property type="nucleotide sequence ID" value="XM_005205127.5"/>
</dbReference>
<dbReference type="RefSeq" id="XP_010802283.1">
    <molecule id="P01289-1"/>
    <property type="nucleotide sequence ID" value="XM_010803981.4"/>
</dbReference>
<dbReference type="RefSeq" id="XP_024846216.1">
    <molecule id="P01289-2"/>
    <property type="nucleotide sequence ID" value="XM_024990448.2"/>
</dbReference>
<dbReference type="FunCoup" id="P01289">
    <property type="interactions" value="148"/>
</dbReference>
<dbReference type="PaxDb" id="9913-ENSBTAP00000020419"/>
<dbReference type="Ensembl" id="ENSBTAT00000020419.6">
    <molecule id="P01289-2"/>
    <property type="protein sequence ID" value="ENSBTAP00000020419.5"/>
    <property type="gene ID" value="ENSBTAG00000015356.7"/>
</dbReference>
<dbReference type="Ensembl" id="ENSBTAT00000057037.4">
    <molecule id="P01289-3"/>
    <property type="protein sequence ID" value="ENSBTAP00000053014.2"/>
    <property type="gene ID" value="ENSBTAG00000015356.7"/>
</dbReference>
<dbReference type="Ensembl" id="ENSBTAT00000063529.3">
    <molecule id="P01289-1"/>
    <property type="protein sequence ID" value="ENSBTAP00000055772.3"/>
    <property type="gene ID" value="ENSBTAG00000015356.7"/>
</dbReference>
<dbReference type="GeneID" id="281512"/>
<dbReference type="KEGG" id="bta:281512"/>
<dbReference type="CTD" id="6863"/>
<dbReference type="VEuPathDB" id="HostDB:ENSBTAG00000015356"/>
<dbReference type="eggNOG" id="ENOG502S1KJ">
    <property type="taxonomic scope" value="Eukaryota"/>
</dbReference>
<dbReference type="GeneTree" id="ENSGT00390000002457"/>
<dbReference type="HOGENOM" id="CLU_149426_0_0_1"/>
<dbReference type="InParanoid" id="P01289"/>
<dbReference type="OMA" id="GQMSHKR"/>
<dbReference type="OrthoDB" id="9936276at2759"/>
<dbReference type="TreeFam" id="TF333405"/>
<dbReference type="Reactome" id="R-BTA-380095">
    <property type="pathway name" value="Tachykinin receptors bind tachykinins"/>
</dbReference>
<dbReference type="Reactome" id="R-BTA-416476">
    <property type="pathway name" value="G alpha (q) signalling events"/>
</dbReference>
<dbReference type="Proteomes" id="UP000009136">
    <property type="component" value="Chromosome 4"/>
</dbReference>
<dbReference type="Bgee" id="ENSBTAG00000015356">
    <property type="expression patterns" value="Expressed in midbrain and 47 other cell types or tissues"/>
</dbReference>
<dbReference type="GO" id="GO:0030424">
    <property type="term" value="C:axon"/>
    <property type="evidence" value="ECO:0000250"/>
    <property type="project" value="AgBase"/>
</dbReference>
<dbReference type="GO" id="GO:0005576">
    <property type="term" value="C:extracellular region"/>
    <property type="evidence" value="ECO:0000250"/>
    <property type="project" value="AgBase"/>
</dbReference>
<dbReference type="GO" id="GO:0005615">
    <property type="term" value="C:extracellular space"/>
    <property type="evidence" value="ECO:0000318"/>
    <property type="project" value="GO_Central"/>
</dbReference>
<dbReference type="GO" id="GO:0043025">
    <property type="term" value="C:neuronal cell body"/>
    <property type="evidence" value="ECO:0000250"/>
    <property type="project" value="AgBase"/>
</dbReference>
<dbReference type="GO" id="GO:0045202">
    <property type="term" value="C:synapse"/>
    <property type="evidence" value="ECO:0007669"/>
    <property type="project" value="GOC"/>
</dbReference>
<dbReference type="GO" id="GO:0031835">
    <property type="term" value="F:substance P receptor binding"/>
    <property type="evidence" value="ECO:0000318"/>
    <property type="project" value="GO_Central"/>
</dbReference>
<dbReference type="GO" id="GO:1990090">
    <property type="term" value="P:cellular response to nerve growth factor stimulus"/>
    <property type="evidence" value="ECO:0007669"/>
    <property type="project" value="Ensembl"/>
</dbReference>
<dbReference type="GO" id="GO:0007268">
    <property type="term" value="P:chemical synaptic transmission"/>
    <property type="evidence" value="ECO:0007669"/>
    <property type="project" value="UniProtKB-KW"/>
</dbReference>
<dbReference type="GO" id="GO:0006954">
    <property type="term" value="P:inflammatory response"/>
    <property type="evidence" value="ECO:0000250"/>
    <property type="project" value="AgBase"/>
</dbReference>
<dbReference type="GO" id="GO:0007218">
    <property type="term" value="P:neuropeptide signaling pathway"/>
    <property type="evidence" value="ECO:0007669"/>
    <property type="project" value="UniProtKB-KW"/>
</dbReference>
<dbReference type="GO" id="GO:0007204">
    <property type="term" value="P:positive regulation of cytosolic calcium ion concentration"/>
    <property type="evidence" value="ECO:0000250"/>
    <property type="project" value="AgBase"/>
</dbReference>
<dbReference type="GO" id="GO:0048265">
    <property type="term" value="P:response to pain"/>
    <property type="evidence" value="ECO:0000250"/>
    <property type="project" value="AgBase"/>
</dbReference>
<dbReference type="GO" id="GO:0019233">
    <property type="term" value="P:sensory perception of pain"/>
    <property type="evidence" value="ECO:0000250"/>
    <property type="project" value="AgBase"/>
</dbReference>
<dbReference type="GO" id="GO:0007217">
    <property type="term" value="P:tachykinin receptor signaling pathway"/>
    <property type="evidence" value="ECO:0000318"/>
    <property type="project" value="GO_Central"/>
</dbReference>
<dbReference type="InterPro" id="IPR013055">
    <property type="entry name" value="Tachy_Neuro_lke_CS"/>
</dbReference>
<dbReference type="InterPro" id="IPR008215">
    <property type="entry name" value="Tachykinin_dom"/>
</dbReference>
<dbReference type="InterPro" id="IPR008216">
    <property type="entry name" value="Tachykinin_fam"/>
</dbReference>
<dbReference type="PANTHER" id="PTHR11250:SF3">
    <property type="entry name" value="PROTACHYKININ-1"/>
    <property type="match status" value="1"/>
</dbReference>
<dbReference type="PANTHER" id="PTHR11250">
    <property type="entry name" value="TACHYKININ"/>
    <property type="match status" value="1"/>
</dbReference>
<dbReference type="Pfam" id="PF02202">
    <property type="entry name" value="Tachykinin"/>
    <property type="match status" value="1"/>
</dbReference>
<dbReference type="PRINTS" id="PR01829">
    <property type="entry name" value="PROTACHYKNIN"/>
</dbReference>
<dbReference type="SMART" id="SM00203">
    <property type="entry name" value="TK"/>
    <property type="match status" value="2"/>
</dbReference>
<dbReference type="PROSITE" id="PS00267">
    <property type="entry name" value="TACHYKININ"/>
    <property type="match status" value="2"/>
</dbReference>
<reference key="1">
    <citation type="journal article" date="1983" name="Nature">
        <title>Nucleotide sequences of cloned cDNAs for two types of bovine brain substance P precursor.</title>
        <authorList>
            <person name="Nawa H."/>
            <person name="Hirose T."/>
            <person name="Takashima H."/>
            <person name="Inayama S."/>
            <person name="Nakanishi S."/>
        </authorList>
    </citation>
    <scope>NUCLEOTIDE SEQUENCE [MRNA] (ISOFORMS ALPHA AND BETA)</scope>
    <scope>AMIDATION AT MET-68 AND MET-107</scope>
</reference>
<reference key="2">
    <citation type="journal article" date="1984" name="Nature">
        <title>Tissue-specific generation of two preprotachykinin mRNAs from one gene by alternative RNA splicing.</title>
        <authorList>
            <person name="Nawa H."/>
            <person name="Kotani H."/>
            <person name="Nakanishi S."/>
        </authorList>
    </citation>
    <scope>NUCLEOTIDE SEQUENCE [GENOMIC DNA / MRNA]</scope>
    <scope>ALTERNATIVE SPLICING</scope>
</reference>
<reference key="3">
    <citation type="submission" date="2007-06" db="EMBL/GenBank/DDBJ databases">
        <authorList>
            <consortium name="NIH - Mammalian Gene Collection (MGC) project"/>
        </authorList>
    </citation>
    <scope>NUCLEOTIDE SEQUENCE [LARGE SCALE MRNA] (ISOFORMS BETA AND GAMMA)</scope>
    <source>
        <strain>Crossbred X Angus</strain>
        <tissue>Ileum</tissue>
        <tissue>Liver</tissue>
    </source>
</reference>
<reference key="4">
    <citation type="journal article" date="1991" name="Endocrinology">
        <title>Tachykinin (substance-P) gene expression in Leydig cells of the human and mouse testis.</title>
        <authorList>
            <person name="Chiwakata C."/>
            <person name="Brackmann B."/>
            <person name="Hunt N."/>
            <person name="Davidoff M."/>
            <person name="Schulze W."/>
            <person name="Ivell R."/>
        </authorList>
    </citation>
    <scope>NUCLEOTIDE SEQUENCE [MRNA] OF 36-122 (ISOFORMS BETA AND GAMMA)</scope>
    <source>
        <tissue>Hypothalamus</tissue>
    </source>
</reference>
<reference key="5">
    <citation type="journal article" date="1989" name="J. Neurochem.">
        <title>Quantitation and characterization of peptides from the C-terminal flanking region of rat and bovine preprotachykinins.</title>
        <authorList>
            <person name="McGregor G.P."/>
            <person name="Kage R."/>
            <person name="Thim L."/>
            <person name="Conlon J.M."/>
        </authorList>
    </citation>
    <scope>PROTEIN SEQUENCE OF 111-126 (ISOFORM BETA)</scope>
</reference>
<gene>
    <name type="primary">TAC1</name>
    <name type="synonym">NKA</name>
    <name type="synonym">NKNA</name>
    <name type="synonym">TAC2</name>
</gene>
<proteinExistence type="evidence at protein level"/>
<comment type="function">
    <text>Tachykinins are active peptides which excite neurons, evoke behavioral responses, are potent vasodilators and secretagogues, and contract (directly or indirectly) many smooth muscles.</text>
</comment>
<comment type="subcellular location">
    <subcellularLocation>
        <location>Secreted</location>
    </subcellularLocation>
</comment>
<comment type="alternative products">
    <event type="alternative splicing"/>
    <isoform>
        <id>P01289-1</id>
        <name>Beta</name>
        <sequence type="displayed"/>
    </isoform>
    <isoform>
        <id>P01289-2</id>
        <name>Alpha</name>
        <sequence type="described" ref="VSP_006373 VSP_006374"/>
    </isoform>
    <isoform>
        <id>P01289-3</id>
        <name>Gamma</name>
        <sequence type="described" ref="VSP_006372"/>
    </isoform>
    <isoform>
        <id>P01289-4</id>
        <name>Delta</name>
        <sequence type="described" ref="VSP_006372 VSP_006373 VSP_006374"/>
    </isoform>
</comment>
<comment type="PTM">
    <molecule>Substance P</molecule>
    <text evidence="1">The substance P form is cleaved at Pro-59 by the prolyl endopeptidase FAP (seprase) activity (in vitro). Substance P is also cleaved and degraded by Angiotensin-converting enzyme (ACE) and neprilysin (MME).</text>
</comment>
<comment type="similarity">
    <text evidence="7">Belongs to the tachykinin family.</text>
</comment>
<comment type="sequence caution" evidence="7">
    <conflict type="miscellaneous discrepancy">
        <sequence resource="EMBL-CDS" id="CAA24943"/>
    </conflict>
</comment>
<keyword id="KW-0025">Alternative splicing</keyword>
<keyword id="KW-0027">Amidation</keyword>
<keyword id="KW-0165">Cleavage on pair of basic residues</keyword>
<keyword id="KW-0903">Direct protein sequencing</keyword>
<keyword id="KW-0527">Neuropeptide</keyword>
<keyword id="KW-0529">Neurotransmitter</keyword>
<keyword id="KW-1185">Reference proteome</keyword>
<keyword id="KW-0964">Secreted</keyword>
<keyword id="KW-0732">Signal</keyword>
<name>TKN1_BOVIN</name>
<organism>
    <name type="scientific">Bos taurus</name>
    <name type="common">Bovine</name>
    <dbReference type="NCBI Taxonomy" id="9913"/>
    <lineage>
        <taxon>Eukaryota</taxon>
        <taxon>Metazoa</taxon>
        <taxon>Chordata</taxon>
        <taxon>Craniata</taxon>
        <taxon>Vertebrata</taxon>
        <taxon>Euteleostomi</taxon>
        <taxon>Mammalia</taxon>
        <taxon>Eutheria</taxon>
        <taxon>Laurasiatheria</taxon>
        <taxon>Artiodactyla</taxon>
        <taxon>Ruminantia</taxon>
        <taxon>Pecora</taxon>
        <taxon>Bovidae</taxon>
        <taxon>Bovinae</taxon>
        <taxon>Bos</taxon>
    </lineage>
</organism>
<evidence type="ECO:0000250" key="1">
    <source>
        <dbReference type="UniProtKB" id="P20366"/>
    </source>
</evidence>
<evidence type="ECO:0000255" key="2"/>
<evidence type="ECO:0000269" key="3">
    <source>
    </source>
</evidence>
<evidence type="ECO:0000303" key="4">
    <source>
    </source>
</evidence>
<evidence type="ECO:0000303" key="5">
    <source>
    </source>
</evidence>
<evidence type="ECO:0000303" key="6">
    <source ref="3"/>
</evidence>
<evidence type="ECO:0000305" key="7"/>